<accession>Q8DD46</accession>
<reference key="1">
    <citation type="submission" date="2002-12" db="EMBL/GenBank/DDBJ databases">
        <title>Complete genome sequence of Vibrio vulnificus CMCP6.</title>
        <authorList>
            <person name="Rhee J.H."/>
            <person name="Kim S.Y."/>
            <person name="Chung S.S."/>
            <person name="Kim J.J."/>
            <person name="Moon Y.H."/>
            <person name="Jeong H."/>
            <person name="Choy H.E."/>
        </authorList>
    </citation>
    <scope>NUCLEOTIDE SEQUENCE [LARGE SCALE GENOMIC DNA]</scope>
    <source>
        <strain>CMCP6</strain>
    </source>
</reference>
<comment type="function">
    <text evidence="1">Conversion of NADPH, generated by peripheral catabolic pathways, to NADH, which can enter the respiratory chain for energy generation.</text>
</comment>
<comment type="catalytic activity">
    <reaction evidence="1">
        <text>NAD(+) + NADPH = NADH + NADP(+)</text>
        <dbReference type="Rhea" id="RHEA:11692"/>
        <dbReference type="ChEBI" id="CHEBI:57540"/>
        <dbReference type="ChEBI" id="CHEBI:57783"/>
        <dbReference type="ChEBI" id="CHEBI:57945"/>
        <dbReference type="ChEBI" id="CHEBI:58349"/>
        <dbReference type="EC" id="1.6.1.1"/>
    </reaction>
</comment>
<comment type="cofactor">
    <cofactor evidence="1">
        <name>FAD</name>
        <dbReference type="ChEBI" id="CHEBI:57692"/>
    </cofactor>
    <text evidence="1">Binds 1 FAD per subunit.</text>
</comment>
<comment type="subcellular location">
    <subcellularLocation>
        <location evidence="1">Cytoplasm</location>
    </subcellularLocation>
</comment>
<comment type="similarity">
    <text evidence="1">Belongs to the class-I pyridine nucleotide-disulfide oxidoreductase family.</text>
</comment>
<feature type="chain" id="PRO_0000068077" description="Soluble pyridine nucleotide transhydrogenase">
    <location>
        <begin position="1"/>
        <end position="466"/>
    </location>
</feature>
<feature type="binding site" evidence="1">
    <location>
        <begin position="36"/>
        <end position="45"/>
    </location>
    <ligand>
        <name>FAD</name>
        <dbReference type="ChEBI" id="CHEBI:57692"/>
    </ligand>
</feature>
<proteinExistence type="inferred from homology"/>
<gene>
    <name evidence="1" type="primary">sthA</name>
    <name type="ordered locus">VV1_1168</name>
</gene>
<keyword id="KW-0963">Cytoplasm</keyword>
<keyword id="KW-0274">FAD</keyword>
<keyword id="KW-0285">Flavoprotein</keyword>
<keyword id="KW-0520">NAD</keyword>
<keyword id="KW-0521">NADP</keyword>
<keyword id="KW-0560">Oxidoreductase</keyword>
<protein>
    <recommendedName>
        <fullName evidence="1">Soluble pyridine nucleotide transhydrogenase</fullName>
        <shortName evidence="1">STH</shortName>
        <ecNumber evidence="1">1.6.1.1</ecNumber>
    </recommendedName>
    <alternativeName>
        <fullName evidence="1">NAD(P)(+) transhydrogenase [B-specific]</fullName>
    </alternativeName>
</protein>
<evidence type="ECO:0000255" key="1">
    <source>
        <dbReference type="HAMAP-Rule" id="MF_00247"/>
    </source>
</evidence>
<sequence>MAHANHFDVIVIGSGPGGEGAAMGLTKAGLKVAVVEKESSVGGGCTHWGTIPSKALRHAVSRIIEFNSNPLFCKNNSSLHATFSTILGHAKSVIDKQTRLRQGFYDRNQCQLIFGTARFTDAHTISVTQNDGTEEVYTADKFVIATGSRPYQPADVDFNHERIYDSDSILSLKHDPRHIIIYGAGVIGCEYASIFRGLGVKTDLINTRDRLLAFLDNEVSDALSYHFWNSGVVIRNDETYERIEGTEDGVIVHLQSGKKMKADCLLYANGRTGNTDKLNLPAVGLQGDSRGQLKVDGNYQTEVEHVYAVGDVIGYPSLASAAYDQGRFVAQAITKGKADGYLIDDIPTGIYTIPEISSVGKTEQELTAAKVPYEVGRSSFKHLARAQIAGKDIGSLKILFHRETKEILGIHCFGERAAEIIHIGQAIMEQKGEANTIEYFVNTTFNYPTMAEAYRVAALNGLNRLF</sequence>
<organism>
    <name type="scientific">Vibrio vulnificus (strain CMCP6)</name>
    <dbReference type="NCBI Taxonomy" id="216895"/>
    <lineage>
        <taxon>Bacteria</taxon>
        <taxon>Pseudomonadati</taxon>
        <taxon>Pseudomonadota</taxon>
        <taxon>Gammaproteobacteria</taxon>
        <taxon>Vibrionales</taxon>
        <taxon>Vibrionaceae</taxon>
        <taxon>Vibrio</taxon>
    </lineage>
</organism>
<dbReference type="EC" id="1.6.1.1" evidence="1"/>
<dbReference type="EMBL" id="AE016795">
    <property type="protein sequence ID" value="AAO09639.1"/>
    <property type="molecule type" value="Genomic_DNA"/>
</dbReference>
<dbReference type="RefSeq" id="WP_011079178.1">
    <property type="nucleotide sequence ID" value="NC_004459.3"/>
</dbReference>
<dbReference type="SMR" id="Q8DD46"/>
<dbReference type="GeneID" id="93895442"/>
<dbReference type="KEGG" id="vvu:VV1_1168"/>
<dbReference type="HOGENOM" id="CLU_016755_0_0_6"/>
<dbReference type="Proteomes" id="UP000002275">
    <property type="component" value="Chromosome 1"/>
</dbReference>
<dbReference type="GO" id="GO:0005829">
    <property type="term" value="C:cytosol"/>
    <property type="evidence" value="ECO:0007669"/>
    <property type="project" value="TreeGrafter"/>
</dbReference>
<dbReference type="GO" id="GO:0004148">
    <property type="term" value="F:dihydrolipoyl dehydrogenase (NADH) activity"/>
    <property type="evidence" value="ECO:0007669"/>
    <property type="project" value="TreeGrafter"/>
</dbReference>
<dbReference type="GO" id="GO:0050660">
    <property type="term" value="F:flavin adenine dinucleotide binding"/>
    <property type="evidence" value="ECO:0007669"/>
    <property type="project" value="TreeGrafter"/>
</dbReference>
<dbReference type="GO" id="GO:0003957">
    <property type="term" value="F:NAD(P)+ transhydrogenase (Si-specific) activity"/>
    <property type="evidence" value="ECO:0007669"/>
    <property type="project" value="UniProtKB-UniRule"/>
</dbReference>
<dbReference type="GO" id="GO:0006103">
    <property type="term" value="P:2-oxoglutarate metabolic process"/>
    <property type="evidence" value="ECO:0007669"/>
    <property type="project" value="TreeGrafter"/>
</dbReference>
<dbReference type="GO" id="GO:0006739">
    <property type="term" value="P:NADP metabolic process"/>
    <property type="evidence" value="ECO:0007669"/>
    <property type="project" value="UniProtKB-UniRule"/>
</dbReference>
<dbReference type="FunFam" id="3.30.390.30:FF:000002">
    <property type="entry name" value="Soluble pyridine nucleotide transhydrogenase"/>
    <property type="match status" value="1"/>
</dbReference>
<dbReference type="FunFam" id="3.50.50.60:FF:000008">
    <property type="entry name" value="Soluble pyridine nucleotide transhydrogenase"/>
    <property type="match status" value="1"/>
</dbReference>
<dbReference type="Gene3D" id="3.30.390.30">
    <property type="match status" value="1"/>
</dbReference>
<dbReference type="Gene3D" id="3.50.50.60">
    <property type="entry name" value="FAD/NAD(P)-binding domain"/>
    <property type="match status" value="2"/>
</dbReference>
<dbReference type="HAMAP" id="MF_00247">
    <property type="entry name" value="SthA"/>
    <property type="match status" value="1"/>
</dbReference>
<dbReference type="InterPro" id="IPR050151">
    <property type="entry name" value="Class-I_Pyr_Nuc-Dis_Oxidored"/>
</dbReference>
<dbReference type="InterPro" id="IPR036188">
    <property type="entry name" value="FAD/NAD-bd_sf"/>
</dbReference>
<dbReference type="InterPro" id="IPR023753">
    <property type="entry name" value="FAD/NAD-binding_dom"/>
</dbReference>
<dbReference type="InterPro" id="IPR016156">
    <property type="entry name" value="FAD/NAD-linked_Rdtase_dimer_sf"/>
</dbReference>
<dbReference type="InterPro" id="IPR001100">
    <property type="entry name" value="Pyr_nuc-diS_OxRdtase"/>
</dbReference>
<dbReference type="InterPro" id="IPR004099">
    <property type="entry name" value="Pyr_nucl-diS_OxRdtase_dimer"/>
</dbReference>
<dbReference type="InterPro" id="IPR022962">
    <property type="entry name" value="STH_gammaproteobact"/>
</dbReference>
<dbReference type="NCBIfam" id="NF003585">
    <property type="entry name" value="PRK05249.1"/>
    <property type="match status" value="1"/>
</dbReference>
<dbReference type="PANTHER" id="PTHR22912">
    <property type="entry name" value="DISULFIDE OXIDOREDUCTASE"/>
    <property type="match status" value="1"/>
</dbReference>
<dbReference type="PANTHER" id="PTHR22912:SF93">
    <property type="entry name" value="SOLUBLE PYRIDINE NUCLEOTIDE TRANSHYDROGENASE"/>
    <property type="match status" value="1"/>
</dbReference>
<dbReference type="Pfam" id="PF07992">
    <property type="entry name" value="Pyr_redox_2"/>
    <property type="match status" value="1"/>
</dbReference>
<dbReference type="Pfam" id="PF02852">
    <property type="entry name" value="Pyr_redox_dim"/>
    <property type="match status" value="1"/>
</dbReference>
<dbReference type="PIRSF" id="PIRSF000350">
    <property type="entry name" value="Mercury_reductase_MerA"/>
    <property type="match status" value="1"/>
</dbReference>
<dbReference type="PRINTS" id="PR00368">
    <property type="entry name" value="FADPNR"/>
</dbReference>
<dbReference type="PRINTS" id="PR00411">
    <property type="entry name" value="PNDRDTASEI"/>
</dbReference>
<dbReference type="SUPFAM" id="SSF51905">
    <property type="entry name" value="FAD/NAD(P)-binding domain"/>
    <property type="match status" value="1"/>
</dbReference>
<dbReference type="SUPFAM" id="SSF55424">
    <property type="entry name" value="FAD/NAD-linked reductases, dimerisation (C-terminal) domain"/>
    <property type="match status" value="1"/>
</dbReference>
<name>STHA_VIBVU</name>